<comment type="subunit">
    <text evidence="1">Part of the 50S ribosomal subunit. Contacts protein L32.</text>
</comment>
<comment type="similarity">
    <text evidence="1">Belongs to the bacterial ribosomal protein bL17 family.</text>
</comment>
<gene>
    <name evidence="1" type="primary">rplQ</name>
    <name type="ordered locus">Plut_0208</name>
</gene>
<proteinExistence type="inferred from homology"/>
<sequence>MRKVKPARKLGRTAAHRRATLSSLSTQLILHKRIETTEAKAKETRKVVEKIITKALKGTVHAQREIFKDIRDKEAIKTLFGEVVAKVGDRPGGYTRIIKLCPRFGDAAKMAVIELVDFAEAPVAAPKAAKQDRAKRVKGSKKVTGDVAPAVAPVPSAPAETQEEAKAPESAE</sequence>
<reference key="1">
    <citation type="submission" date="2005-08" db="EMBL/GenBank/DDBJ databases">
        <title>Complete sequence of Pelodictyon luteolum DSM 273.</title>
        <authorList>
            <consortium name="US DOE Joint Genome Institute"/>
            <person name="Copeland A."/>
            <person name="Lucas S."/>
            <person name="Lapidus A."/>
            <person name="Barry K."/>
            <person name="Detter J.C."/>
            <person name="Glavina T."/>
            <person name="Hammon N."/>
            <person name="Israni S."/>
            <person name="Pitluck S."/>
            <person name="Bryant D."/>
            <person name="Schmutz J."/>
            <person name="Larimer F."/>
            <person name="Land M."/>
            <person name="Kyrpides N."/>
            <person name="Ivanova N."/>
            <person name="Richardson P."/>
        </authorList>
    </citation>
    <scope>NUCLEOTIDE SEQUENCE [LARGE SCALE GENOMIC DNA]</scope>
    <source>
        <strain>DSM 273 / BCRC 81028 / 2530</strain>
    </source>
</reference>
<evidence type="ECO:0000255" key="1">
    <source>
        <dbReference type="HAMAP-Rule" id="MF_01368"/>
    </source>
</evidence>
<evidence type="ECO:0000256" key="2">
    <source>
        <dbReference type="SAM" id="MobiDB-lite"/>
    </source>
</evidence>
<evidence type="ECO:0000305" key="3"/>
<protein>
    <recommendedName>
        <fullName evidence="1">Large ribosomal subunit protein bL17</fullName>
    </recommendedName>
    <alternativeName>
        <fullName evidence="3">50S ribosomal protein L17</fullName>
    </alternativeName>
</protein>
<accession>Q3B6D5</accession>
<keyword id="KW-1185">Reference proteome</keyword>
<keyword id="KW-0687">Ribonucleoprotein</keyword>
<keyword id="KW-0689">Ribosomal protein</keyword>
<name>RL17_CHLL3</name>
<feature type="chain" id="PRO_1000055903" description="Large ribosomal subunit protein bL17">
    <location>
        <begin position="1"/>
        <end position="172"/>
    </location>
</feature>
<feature type="region of interest" description="Disordered" evidence="2">
    <location>
        <begin position="127"/>
        <end position="172"/>
    </location>
</feature>
<feature type="compositionally biased region" description="Low complexity" evidence="2">
    <location>
        <begin position="147"/>
        <end position="159"/>
    </location>
</feature>
<feature type="compositionally biased region" description="Basic and acidic residues" evidence="2">
    <location>
        <begin position="163"/>
        <end position="172"/>
    </location>
</feature>
<dbReference type="EMBL" id="CP000096">
    <property type="protein sequence ID" value="ABB23096.1"/>
    <property type="molecule type" value="Genomic_DNA"/>
</dbReference>
<dbReference type="RefSeq" id="WP_011356971.1">
    <property type="nucleotide sequence ID" value="NC_007512.1"/>
</dbReference>
<dbReference type="SMR" id="Q3B6D5"/>
<dbReference type="STRING" id="319225.Plut_0208"/>
<dbReference type="KEGG" id="plt:Plut_0208"/>
<dbReference type="eggNOG" id="COG0203">
    <property type="taxonomic scope" value="Bacteria"/>
</dbReference>
<dbReference type="HOGENOM" id="CLU_074407_0_1_10"/>
<dbReference type="OrthoDB" id="9809073at2"/>
<dbReference type="Proteomes" id="UP000002709">
    <property type="component" value="Chromosome"/>
</dbReference>
<dbReference type="GO" id="GO:0022625">
    <property type="term" value="C:cytosolic large ribosomal subunit"/>
    <property type="evidence" value="ECO:0007669"/>
    <property type="project" value="TreeGrafter"/>
</dbReference>
<dbReference type="GO" id="GO:0003735">
    <property type="term" value="F:structural constituent of ribosome"/>
    <property type="evidence" value="ECO:0007669"/>
    <property type="project" value="InterPro"/>
</dbReference>
<dbReference type="GO" id="GO:0006412">
    <property type="term" value="P:translation"/>
    <property type="evidence" value="ECO:0007669"/>
    <property type="project" value="UniProtKB-UniRule"/>
</dbReference>
<dbReference type="Gene3D" id="3.90.1030.10">
    <property type="entry name" value="Ribosomal protein L17"/>
    <property type="match status" value="1"/>
</dbReference>
<dbReference type="HAMAP" id="MF_01368">
    <property type="entry name" value="Ribosomal_bL17"/>
    <property type="match status" value="1"/>
</dbReference>
<dbReference type="InterPro" id="IPR000456">
    <property type="entry name" value="Ribosomal_bL17"/>
</dbReference>
<dbReference type="InterPro" id="IPR036373">
    <property type="entry name" value="Ribosomal_bL17_sf"/>
</dbReference>
<dbReference type="NCBIfam" id="TIGR00059">
    <property type="entry name" value="L17"/>
    <property type="match status" value="1"/>
</dbReference>
<dbReference type="PANTHER" id="PTHR14413:SF16">
    <property type="entry name" value="LARGE RIBOSOMAL SUBUNIT PROTEIN BL17M"/>
    <property type="match status" value="1"/>
</dbReference>
<dbReference type="PANTHER" id="PTHR14413">
    <property type="entry name" value="RIBOSOMAL PROTEIN L17"/>
    <property type="match status" value="1"/>
</dbReference>
<dbReference type="Pfam" id="PF01196">
    <property type="entry name" value="Ribosomal_L17"/>
    <property type="match status" value="1"/>
</dbReference>
<dbReference type="SUPFAM" id="SSF64263">
    <property type="entry name" value="Prokaryotic ribosomal protein L17"/>
    <property type="match status" value="1"/>
</dbReference>
<organism>
    <name type="scientific">Chlorobium luteolum (strain DSM 273 / BCRC 81028 / 2530)</name>
    <name type="common">Pelodictyon luteolum</name>
    <dbReference type="NCBI Taxonomy" id="319225"/>
    <lineage>
        <taxon>Bacteria</taxon>
        <taxon>Pseudomonadati</taxon>
        <taxon>Chlorobiota</taxon>
        <taxon>Chlorobiia</taxon>
        <taxon>Chlorobiales</taxon>
        <taxon>Chlorobiaceae</taxon>
        <taxon>Chlorobium/Pelodictyon group</taxon>
        <taxon>Pelodictyon</taxon>
    </lineage>
</organism>